<keyword id="KW-0963">Cytoplasm</keyword>
<keyword id="KW-0417">Keratinization</keyword>
<keyword id="KW-1185">Reference proteome</keyword>
<keyword id="KW-0677">Repeat</keyword>
<dbReference type="EMBL" id="M34442">
    <property type="protein sequence ID" value="AAA30853.1"/>
    <property type="molecule type" value="Genomic_DNA"/>
</dbReference>
<dbReference type="PIR" id="I46207">
    <property type="entry name" value="I46207"/>
</dbReference>
<dbReference type="SMR" id="P18174"/>
<dbReference type="STRING" id="9615.ENSCAFP00000032077"/>
<dbReference type="PaxDb" id="9612-ENSCAFP00000032077"/>
<dbReference type="eggNOG" id="ENOG502S84Y">
    <property type="taxonomic scope" value="Eukaryota"/>
</dbReference>
<dbReference type="InParanoid" id="P18174"/>
<dbReference type="Proteomes" id="UP000002254">
    <property type="component" value="Unplaced"/>
</dbReference>
<dbReference type="Proteomes" id="UP000694429">
    <property type="component" value="Unplaced"/>
</dbReference>
<dbReference type="Proteomes" id="UP000694542">
    <property type="component" value="Unplaced"/>
</dbReference>
<dbReference type="Proteomes" id="UP000805418">
    <property type="component" value="Unplaced"/>
</dbReference>
<dbReference type="GO" id="GO:0005737">
    <property type="term" value="C:cytoplasm"/>
    <property type="evidence" value="ECO:0007669"/>
    <property type="project" value="UniProtKB-SubCell"/>
</dbReference>
<dbReference type="GO" id="GO:0031424">
    <property type="term" value="P:keratinization"/>
    <property type="evidence" value="ECO:0007669"/>
    <property type="project" value="UniProtKB-KW"/>
</dbReference>
<dbReference type="InterPro" id="IPR019743">
    <property type="entry name" value="Involucrin_CS"/>
</dbReference>
<dbReference type="InterPro" id="IPR019571">
    <property type="entry name" value="Involucrin_N"/>
</dbReference>
<dbReference type="Pfam" id="PF10583">
    <property type="entry name" value="Involucrin_N"/>
    <property type="match status" value="1"/>
</dbReference>
<dbReference type="PROSITE" id="PS00795">
    <property type="entry name" value="INVOLUCRIN"/>
    <property type="match status" value="1"/>
</dbReference>
<accession>P18174</accession>
<name>INVO_CANLF</name>
<gene>
    <name type="primary">IVL</name>
</gene>
<sequence length="285" mass="33384">MSQQHTLPVTLPPALSQGPLKPESPPIDTQQEQVKQPTSLPVLCQKMPSSLPGKVPLGHGEKHTSLVKGEPEQQCEPQEQEQQQKQQESQEQKLHLEQCLEQHQEQQESQDQKLYPEQCLEQQQEQQESQDQKLYPEQCLEQQQEQQESQEKELHLEQEQQKEELQQQEQQQGKEQCEKHQEAKNLEQQLEQIGAQRKQQQKEQLEQEKKLVDQHLDQEPAQRTEQPEKKEEQVLEQQGQQEGQLEQPAFVPAQVQVREPLKGEVLPLIEQQHQKQEVHDPPEHQ</sequence>
<feature type="chain" id="PRO_0000159733" description="Involucrin">
    <location>
        <begin position="1"/>
        <end position="285"/>
    </location>
</feature>
<feature type="region of interest" description="Disordered" evidence="2">
    <location>
        <begin position="1"/>
        <end position="93"/>
    </location>
</feature>
<feature type="region of interest" description="Disordered" evidence="2">
    <location>
        <begin position="120"/>
        <end position="256"/>
    </location>
</feature>
<feature type="region of interest" description="Disordered" evidence="2">
    <location>
        <begin position="266"/>
        <end position="285"/>
    </location>
</feature>
<feature type="compositionally biased region" description="Polar residues" evidence="2">
    <location>
        <begin position="27"/>
        <end position="39"/>
    </location>
</feature>
<feature type="compositionally biased region" description="Low complexity" evidence="2">
    <location>
        <begin position="72"/>
        <end position="87"/>
    </location>
</feature>
<feature type="compositionally biased region" description="Low complexity" evidence="2">
    <location>
        <begin position="120"/>
        <end position="129"/>
    </location>
</feature>
<feature type="compositionally biased region" description="Low complexity" evidence="2">
    <location>
        <begin position="137"/>
        <end position="147"/>
    </location>
</feature>
<feature type="compositionally biased region" description="Basic and acidic residues" evidence="2">
    <location>
        <begin position="149"/>
        <end position="165"/>
    </location>
</feature>
<feature type="compositionally biased region" description="Basic and acidic residues" evidence="2">
    <location>
        <begin position="175"/>
        <end position="185"/>
    </location>
</feature>
<feature type="compositionally biased region" description="Basic and acidic residues" evidence="2">
    <location>
        <begin position="200"/>
        <end position="233"/>
    </location>
</feature>
<feature type="compositionally biased region" description="Low complexity" evidence="2">
    <location>
        <begin position="235"/>
        <end position="248"/>
    </location>
</feature>
<feature type="compositionally biased region" description="Basic and acidic residues" evidence="2">
    <location>
        <begin position="272"/>
        <end position="285"/>
    </location>
</feature>
<reference key="1">
    <citation type="journal article" date="1990" name="Mol. Biol. Evol.">
        <title>The involucrin genes of pig and dog: comparison of their segments of repeats with those of prosimians and higher primates.</title>
        <authorList>
            <person name="Tseng H."/>
            <person name="Green H."/>
        </authorList>
    </citation>
    <scope>NUCLEOTIDE SEQUENCE [GENOMIC DNA]</scope>
</reference>
<evidence type="ECO:0000250" key="1"/>
<evidence type="ECO:0000256" key="2">
    <source>
        <dbReference type="SAM" id="MobiDB-lite"/>
    </source>
</evidence>
<evidence type="ECO:0000305" key="3"/>
<protein>
    <recommendedName>
        <fullName>Involucrin</fullName>
    </recommendedName>
</protein>
<comment type="function">
    <text>Part of the insoluble cornified cell envelope (CE) of stratified squamous epithelia.</text>
</comment>
<comment type="subunit">
    <text evidence="1">Directly or indirectly cross-linked to cornifelin (CNFN).</text>
</comment>
<comment type="subcellular location">
    <subcellularLocation>
        <location>Cytoplasm</location>
    </subcellularLocation>
    <text>Constituent of the scaffolding of the cornified envelope.</text>
</comment>
<comment type="tissue specificity">
    <text>Keratinocytes of epidermis and other stratified squamous epithelia.</text>
</comment>
<comment type="PTM">
    <text>Substrate of transglutaminase. Specific glutamines or lysines are cross-linked to keratins, desmoplakin and to inter involucrin molecules.</text>
</comment>
<comment type="similarity">
    <text evidence="3">Belongs to the involucrin family.</text>
</comment>
<proteinExistence type="evidence at transcript level"/>
<organism>
    <name type="scientific">Canis lupus familiaris</name>
    <name type="common">Dog</name>
    <name type="synonym">Canis familiaris</name>
    <dbReference type="NCBI Taxonomy" id="9615"/>
    <lineage>
        <taxon>Eukaryota</taxon>
        <taxon>Metazoa</taxon>
        <taxon>Chordata</taxon>
        <taxon>Craniata</taxon>
        <taxon>Vertebrata</taxon>
        <taxon>Euteleostomi</taxon>
        <taxon>Mammalia</taxon>
        <taxon>Eutheria</taxon>
        <taxon>Laurasiatheria</taxon>
        <taxon>Carnivora</taxon>
        <taxon>Caniformia</taxon>
        <taxon>Canidae</taxon>
        <taxon>Canis</taxon>
    </lineage>
</organism>